<name>KGCY_HEDDI</name>
<evidence type="ECO:0000255" key="1">
    <source>
        <dbReference type="PROSITE-ProRule" id="PRU00842"/>
    </source>
</evidence>
<evidence type="ECO:0000255" key="2">
    <source>
        <dbReference type="PROSITE-ProRule" id="PRU00843"/>
    </source>
</evidence>
<evidence type="ECO:0000256" key="3">
    <source>
        <dbReference type="SAM" id="MobiDB-lite"/>
    </source>
</evidence>
<dbReference type="EC" id="2.7.3.1"/>
<dbReference type="EMBL" id="D26103">
    <property type="protein sequence ID" value="BAA05099.1"/>
    <property type="molecule type" value="mRNA"/>
</dbReference>
<dbReference type="PIR" id="S77896">
    <property type="entry name" value="S77896"/>
</dbReference>
<dbReference type="SMR" id="P51546"/>
<dbReference type="GO" id="GO:0005739">
    <property type="term" value="C:mitochondrion"/>
    <property type="evidence" value="ECO:0007669"/>
    <property type="project" value="TreeGrafter"/>
</dbReference>
<dbReference type="GO" id="GO:0005524">
    <property type="term" value="F:ATP binding"/>
    <property type="evidence" value="ECO:0007669"/>
    <property type="project" value="UniProtKB-KW"/>
</dbReference>
<dbReference type="GO" id="GO:0004111">
    <property type="term" value="F:creatine kinase activity"/>
    <property type="evidence" value="ECO:0007669"/>
    <property type="project" value="InterPro"/>
</dbReference>
<dbReference type="GO" id="GO:0047973">
    <property type="term" value="F:guanidinoacetate kinase activity"/>
    <property type="evidence" value="ECO:0007669"/>
    <property type="project" value="UniProtKB-EC"/>
</dbReference>
<dbReference type="GO" id="GO:0046314">
    <property type="term" value="P:phosphocreatine biosynthetic process"/>
    <property type="evidence" value="ECO:0007669"/>
    <property type="project" value="InterPro"/>
</dbReference>
<dbReference type="CDD" id="cd00716">
    <property type="entry name" value="creatine_kinase_like"/>
    <property type="match status" value="1"/>
</dbReference>
<dbReference type="FunFam" id="3.30.590.10:FF:000002">
    <property type="entry name" value="Creatine kinase S-type, mitochondrial"/>
    <property type="match status" value="1"/>
</dbReference>
<dbReference type="FunFam" id="1.10.135.10:FF:000005">
    <property type="entry name" value="Glycocyamine kinase beta chain"/>
    <property type="match status" value="1"/>
</dbReference>
<dbReference type="Gene3D" id="1.10.135.10">
    <property type="entry name" value="ATP:guanido phosphotransferase, N-terminal domain"/>
    <property type="match status" value="1"/>
</dbReference>
<dbReference type="Gene3D" id="3.30.590.10">
    <property type="entry name" value="Glutamine synthetase/guanido kinase, catalytic domain"/>
    <property type="match status" value="1"/>
</dbReference>
<dbReference type="InterPro" id="IPR000749">
    <property type="entry name" value="ATP-guanido_PTrfase"/>
</dbReference>
<dbReference type="InterPro" id="IPR022415">
    <property type="entry name" value="ATP-guanido_PTrfase_AS"/>
</dbReference>
<dbReference type="InterPro" id="IPR022414">
    <property type="entry name" value="ATP-guanido_PTrfase_cat"/>
</dbReference>
<dbReference type="InterPro" id="IPR022413">
    <property type="entry name" value="ATP-guanido_PTrfase_N"/>
</dbReference>
<dbReference type="InterPro" id="IPR036802">
    <property type="entry name" value="ATP-guanido_PTrfase_N_sf"/>
</dbReference>
<dbReference type="InterPro" id="IPR014746">
    <property type="entry name" value="Gln_synth/guanido_kin_cat_dom"/>
</dbReference>
<dbReference type="PANTHER" id="PTHR11547">
    <property type="entry name" value="ARGININE OR CREATINE KINASE"/>
    <property type="match status" value="1"/>
</dbReference>
<dbReference type="PANTHER" id="PTHR11547:SF57">
    <property type="entry name" value="PHOSPHAGEN KINASE C-TERMINAL DOMAIN-CONTAINING PROTEIN"/>
    <property type="match status" value="1"/>
</dbReference>
<dbReference type="Pfam" id="PF00217">
    <property type="entry name" value="ATP-gua_Ptrans"/>
    <property type="match status" value="1"/>
</dbReference>
<dbReference type="Pfam" id="PF02807">
    <property type="entry name" value="ATP-gua_PtransN"/>
    <property type="match status" value="1"/>
</dbReference>
<dbReference type="SUPFAM" id="SSF55931">
    <property type="entry name" value="Glutamine synthetase/guanido kinase"/>
    <property type="match status" value="1"/>
</dbReference>
<dbReference type="SUPFAM" id="SSF48034">
    <property type="entry name" value="Guanido kinase N-terminal domain"/>
    <property type="match status" value="1"/>
</dbReference>
<dbReference type="PROSITE" id="PS00112">
    <property type="entry name" value="PHOSPHAGEN_KINASE"/>
    <property type="match status" value="1"/>
</dbReference>
<dbReference type="PROSITE" id="PS51510">
    <property type="entry name" value="PHOSPHAGEN_KINASE_C"/>
    <property type="match status" value="1"/>
</dbReference>
<dbReference type="PROSITE" id="PS51509">
    <property type="entry name" value="PHOSPHAGEN_KINASE_N"/>
    <property type="match status" value="1"/>
</dbReference>
<organism>
    <name type="scientific">Hediste diversicolor</name>
    <name type="common">Sandworm</name>
    <name type="synonym">Nereis diversicolor</name>
    <dbReference type="NCBI Taxonomy" id="126592"/>
    <lineage>
        <taxon>Eukaryota</taxon>
        <taxon>Metazoa</taxon>
        <taxon>Spiralia</taxon>
        <taxon>Lophotrochozoa</taxon>
        <taxon>Annelida</taxon>
        <taxon>Polychaeta</taxon>
        <taxon>Errantia</taxon>
        <taxon>Phyllodocida</taxon>
        <taxon>Nereididae</taxon>
        <taxon>Hediste</taxon>
        <taxon>Hediste diversicolor species group</taxon>
    </lineage>
</organism>
<proteinExistence type="evidence at transcript level"/>
<reference key="1">
    <citation type="journal article" date="1994" name="J. Mol. Biol.">
        <title>Evolution of phosphagen kinase. Primary structure of glycocyamine kinase and arginine kinase from invertebrates.</title>
        <authorList>
            <person name="Suzuki T."/>
            <person name="Furukohri T."/>
        </authorList>
    </citation>
    <scope>NUCLEOTIDE SEQUENCE [MRNA]</scope>
</reference>
<sequence>MFKDYSREKFAKENFPDLSKHNNVMASHLTYELYEKYWDKVTPNGVTLDKCIQTGVDNPGNKFYGKKTGCVFGDEHSYETFKDFFDRVIEEIHHFKPEDVHPATDLDETKLVGGVFDEKYVKSCRIRCGRSVRGVCLPPAMSRAERRLVEKVVSNALGGLKEDLAGKYFPLTTMNDKDMEALIEDHFLFEKPTGALLTTSGCARDWPDGRGIWHNNGKNFLVWINEEDHIRIISMQKGGDMRAVFSRFGRGLTEVERLMKEKGYELMRNERLGYICTCPTNLGTVVRASVHLRLANLEKDKRFDDFLAKLRLGKRGTGGESSLAEDSTYDISNLARLGKSERELVQVLVDGVNVLIEADKRLEAGKPIDDLTPRLNSSTGTSISATASRHMTL</sequence>
<feature type="chain" id="PRO_0000212008" description="Glycocyamine kinase">
    <location>
        <begin position="1"/>
        <end position="393"/>
    </location>
</feature>
<feature type="domain" description="Phosphagen kinase N-terminal" evidence="1">
    <location>
        <begin position="7"/>
        <end position="94"/>
    </location>
</feature>
<feature type="domain" description="Phosphagen kinase C-terminal" evidence="2">
    <location>
        <begin position="120"/>
        <end position="362"/>
    </location>
</feature>
<feature type="region of interest" description="Disordered" evidence="3">
    <location>
        <begin position="367"/>
        <end position="393"/>
    </location>
</feature>
<feature type="compositionally biased region" description="Low complexity" evidence="3">
    <location>
        <begin position="377"/>
        <end position="393"/>
    </location>
</feature>
<feature type="binding site" evidence="2">
    <location>
        <begin position="123"/>
        <end position="127"/>
    </location>
    <ligand>
        <name>ATP</name>
        <dbReference type="ChEBI" id="CHEBI:30616"/>
    </ligand>
</feature>
<feature type="binding site" evidence="2">
    <location>
        <position position="186"/>
    </location>
    <ligand>
        <name>ATP</name>
        <dbReference type="ChEBI" id="CHEBI:30616"/>
    </ligand>
</feature>
<feature type="binding site" evidence="2">
    <location>
        <position position="231"/>
    </location>
    <ligand>
        <name>ATP</name>
        <dbReference type="ChEBI" id="CHEBI:30616"/>
    </ligand>
</feature>
<feature type="binding site" evidence="2">
    <location>
        <begin position="287"/>
        <end position="291"/>
    </location>
    <ligand>
        <name>ATP</name>
        <dbReference type="ChEBI" id="CHEBI:30616"/>
    </ligand>
</feature>
<feature type="binding site" evidence="2">
    <location>
        <begin position="315"/>
        <end position="320"/>
    </location>
    <ligand>
        <name>ATP</name>
        <dbReference type="ChEBI" id="CHEBI:30616"/>
    </ligand>
</feature>
<feature type="binding site" evidence="2">
    <location>
        <position position="330"/>
    </location>
    <ligand>
        <name>ATP</name>
        <dbReference type="ChEBI" id="CHEBI:30616"/>
    </ligand>
</feature>
<protein>
    <recommendedName>
        <fullName>Glycocyamine kinase</fullName>
        <shortName>GK</shortName>
        <ecNumber>2.7.3.1</ecNumber>
    </recommendedName>
    <alternativeName>
        <fullName>Guanidinoacetate kinase</fullName>
    </alternativeName>
</protein>
<comment type="catalytic activity">
    <reaction>
        <text>guanidinoacetate + ATP = phosphoguanidinoacetate + ADP + H(+)</text>
        <dbReference type="Rhea" id="RHEA:14145"/>
        <dbReference type="ChEBI" id="CHEBI:15378"/>
        <dbReference type="ChEBI" id="CHEBI:30616"/>
        <dbReference type="ChEBI" id="CHEBI:57612"/>
        <dbReference type="ChEBI" id="CHEBI:57742"/>
        <dbReference type="ChEBI" id="CHEBI:456216"/>
        <dbReference type="EC" id="2.7.3.1"/>
    </reaction>
</comment>
<comment type="subunit">
    <text>Monomer.</text>
</comment>
<comment type="similarity">
    <text evidence="1 2">Belongs to the ATP:guanido phosphotransferase family.</text>
</comment>
<accession>P51546</accession>
<keyword id="KW-0067">ATP-binding</keyword>
<keyword id="KW-0418">Kinase</keyword>
<keyword id="KW-0547">Nucleotide-binding</keyword>
<keyword id="KW-0808">Transferase</keyword>